<feature type="chain" id="PRO_1000116298" description="Argininosuccinate lyase">
    <location>
        <begin position="1"/>
        <end position="477"/>
    </location>
</feature>
<proteinExistence type="inferred from homology"/>
<accession>B2I1W9</accession>
<organism>
    <name type="scientific">Acinetobacter baumannii (strain ACICU)</name>
    <dbReference type="NCBI Taxonomy" id="405416"/>
    <lineage>
        <taxon>Bacteria</taxon>
        <taxon>Pseudomonadati</taxon>
        <taxon>Pseudomonadota</taxon>
        <taxon>Gammaproteobacteria</taxon>
        <taxon>Moraxellales</taxon>
        <taxon>Moraxellaceae</taxon>
        <taxon>Acinetobacter</taxon>
        <taxon>Acinetobacter calcoaceticus/baumannii complex</taxon>
    </lineage>
</organism>
<dbReference type="EC" id="4.3.2.1" evidence="1"/>
<dbReference type="EMBL" id="CP000863">
    <property type="protein sequence ID" value="ACC55593.1"/>
    <property type="molecule type" value="Genomic_DNA"/>
</dbReference>
<dbReference type="RefSeq" id="WP_000213740.1">
    <property type="nucleotide sequence ID" value="NZ_CP031380.1"/>
</dbReference>
<dbReference type="SMR" id="B2I1W9"/>
<dbReference type="GeneID" id="92892257"/>
<dbReference type="KEGG" id="abc:ACICU_00281"/>
<dbReference type="HOGENOM" id="CLU_027272_2_3_6"/>
<dbReference type="UniPathway" id="UPA00068">
    <property type="reaction ID" value="UER00114"/>
</dbReference>
<dbReference type="Proteomes" id="UP000008839">
    <property type="component" value="Chromosome"/>
</dbReference>
<dbReference type="GO" id="GO:0005829">
    <property type="term" value="C:cytosol"/>
    <property type="evidence" value="ECO:0007669"/>
    <property type="project" value="TreeGrafter"/>
</dbReference>
<dbReference type="GO" id="GO:0004056">
    <property type="term" value="F:argininosuccinate lyase activity"/>
    <property type="evidence" value="ECO:0007669"/>
    <property type="project" value="UniProtKB-UniRule"/>
</dbReference>
<dbReference type="GO" id="GO:0042450">
    <property type="term" value="P:arginine biosynthetic process via ornithine"/>
    <property type="evidence" value="ECO:0007669"/>
    <property type="project" value="InterPro"/>
</dbReference>
<dbReference type="GO" id="GO:0006526">
    <property type="term" value="P:L-arginine biosynthetic process"/>
    <property type="evidence" value="ECO:0007669"/>
    <property type="project" value="UniProtKB-UniRule"/>
</dbReference>
<dbReference type="CDD" id="cd01359">
    <property type="entry name" value="Argininosuccinate_lyase"/>
    <property type="match status" value="1"/>
</dbReference>
<dbReference type="FunFam" id="1.10.275.10:FF:000002">
    <property type="entry name" value="Argininosuccinate lyase"/>
    <property type="match status" value="1"/>
</dbReference>
<dbReference type="FunFam" id="1.10.40.30:FF:000001">
    <property type="entry name" value="Argininosuccinate lyase"/>
    <property type="match status" value="1"/>
</dbReference>
<dbReference type="FunFam" id="1.20.200.10:FF:000015">
    <property type="entry name" value="argininosuccinate lyase isoform X2"/>
    <property type="match status" value="1"/>
</dbReference>
<dbReference type="Gene3D" id="1.10.40.30">
    <property type="entry name" value="Fumarase/aspartase (C-terminal domain)"/>
    <property type="match status" value="1"/>
</dbReference>
<dbReference type="Gene3D" id="1.20.200.10">
    <property type="entry name" value="Fumarase/aspartase (Central domain)"/>
    <property type="match status" value="1"/>
</dbReference>
<dbReference type="Gene3D" id="1.10.275.10">
    <property type="entry name" value="Fumarase/aspartase (N-terminal domain)"/>
    <property type="match status" value="1"/>
</dbReference>
<dbReference type="HAMAP" id="MF_00006">
    <property type="entry name" value="Arg_succ_lyase"/>
    <property type="match status" value="1"/>
</dbReference>
<dbReference type="InterPro" id="IPR029419">
    <property type="entry name" value="Arg_succ_lyase_C"/>
</dbReference>
<dbReference type="InterPro" id="IPR009049">
    <property type="entry name" value="Argininosuccinate_lyase"/>
</dbReference>
<dbReference type="InterPro" id="IPR024083">
    <property type="entry name" value="Fumarase/histidase_N"/>
</dbReference>
<dbReference type="InterPro" id="IPR020557">
    <property type="entry name" value="Fumarate_lyase_CS"/>
</dbReference>
<dbReference type="InterPro" id="IPR000362">
    <property type="entry name" value="Fumarate_lyase_fam"/>
</dbReference>
<dbReference type="InterPro" id="IPR022761">
    <property type="entry name" value="Fumarate_lyase_N"/>
</dbReference>
<dbReference type="InterPro" id="IPR008948">
    <property type="entry name" value="L-Aspartase-like"/>
</dbReference>
<dbReference type="NCBIfam" id="TIGR00838">
    <property type="entry name" value="argH"/>
    <property type="match status" value="1"/>
</dbReference>
<dbReference type="PANTHER" id="PTHR43814">
    <property type="entry name" value="ARGININOSUCCINATE LYASE"/>
    <property type="match status" value="1"/>
</dbReference>
<dbReference type="PANTHER" id="PTHR43814:SF1">
    <property type="entry name" value="ARGININOSUCCINATE LYASE"/>
    <property type="match status" value="1"/>
</dbReference>
<dbReference type="Pfam" id="PF14698">
    <property type="entry name" value="ASL_C2"/>
    <property type="match status" value="1"/>
</dbReference>
<dbReference type="Pfam" id="PF00206">
    <property type="entry name" value="Lyase_1"/>
    <property type="match status" value="1"/>
</dbReference>
<dbReference type="PRINTS" id="PR00145">
    <property type="entry name" value="ARGSUCLYASE"/>
</dbReference>
<dbReference type="PRINTS" id="PR00149">
    <property type="entry name" value="FUMRATELYASE"/>
</dbReference>
<dbReference type="SUPFAM" id="SSF48557">
    <property type="entry name" value="L-aspartase-like"/>
    <property type="match status" value="1"/>
</dbReference>
<dbReference type="PROSITE" id="PS00163">
    <property type="entry name" value="FUMARATE_LYASES"/>
    <property type="match status" value="1"/>
</dbReference>
<reference key="1">
    <citation type="journal article" date="2008" name="Antimicrob. Agents Chemother.">
        <title>Whole-genome pyrosequencing of an epidemic multidrug-resistant Acinetobacter baumannii strain belonging to the European clone II group.</title>
        <authorList>
            <person name="Iacono M."/>
            <person name="Villa L."/>
            <person name="Fortini D."/>
            <person name="Bordoni R."/>
            <person name="Imperi F."/>
            <person name="Bonnal R.J."/>
            <person name="Sicheritz-Ponten T."/>
            <person name="De Bellis G."/>
            <person name="Visca P."/>
            <person name="Cassone A."/>
            <person name="Carattoli A."/>
        </authorList>
    </citation>
    <scope>NUCLEOTIDE SEQUENCE [LARGE SCALE GENOMIC DNA]</scope>
    <source>
        <strain>ACICU</strain>
    </source>
</reference>
<keyword id="KW-0028">Amino-acid biosynthesis</keyword>
<keyword id="KW-0055">Arginine biosynthesis</keyword>
<keyword id="KW-0963">Cytoplasm</keyword>
<keyword id="KW-0456">Lyase</keyword>
<evidence type="ECO:0000255" key="1">
    <source>
        <dbReference type="HAMAP-Rule" id="MF_00006"/>
    </source>
</evidence>
<gene>
    <name evidence="1" type="primary">argH</name>
    <name type="ordered locus">ACICU_00281</name>
</gene>
<protein>
    <recommendedName>
        <fullName evidence="1">Argininosuccinate lyase</fullName>
        <shortName evidence="1">ASAL</shortName>
        <ecNumber evidence="1">4.3.2.1</ecNumber>
    </recommendedName>
    <alternativeName>
        <fullName evidence="1">Arginosuccinase</fullName>
    </alternativeName>
</protein>
<sequence>MTTSSNPPNSAAPNQTSGMWGGRFSEATDAFVAEFTASVQFDQRFYKQDIAGSIAHATMLAKVGVLTEAERDDIIEGLSTIRAEIEAGTFEWRIDLEDVHMNIESRLTQRIGITGKKLHTGRSRNDQVATDIRLYLRDEIDDILGLLERLQKGLLGLAAKNVNTIMPGFTHLQTAQPVTFGHHLLAWFEMLVRDTERLQDCRKRVNRMPLGSAALAGTTYPIDRAYTAELLGFEAVSENSLDAVSDRDFAIEFNAAASLIMMHLSRMSEELILWTSAQFKFVNIPDRFCTGSSIMPQKKNPDVPELIRGKSGRVFGDLISLLTLMKGQPLAYNKDNQEDKEPLFDAIDTVRGSLMAFADMIPALVPNVEIMREAALRGFSTATDLADYLVKKGVAFRDAHEIVGKAVALGVAEEKDLSELTLEQLQQFSDLITADVFDKALTLEASVNARDHIGGTSPKQVEAAIARAHKRLEQLYA</sequence>
<name>ARLY_ACIBC</name>
<comment type="catalytic activity">
    <reaction evidence="1">
        <text>2-(N(omega)-L-arginino)succinate = fumarate + L-arginine</text>
        <dbReference type="Rhea" id="RHEA:24020"/>
        <dbReference type="ChEBI" id="CHEBI:29806"/>
        <dbReference type="ChEBI" id="CHEBI:32682"/>
        <dbReference type="ChEBI" id="CHEBI:57472"/>
        <dbReference type="EC" id="4.3.2.1"/>
    </reaction>
</comment>
<comment type="pathway">
    <text evidence="1">Amino-acid biosynthesis; L-arginine biosynthesis; L-arginine from L-ornithine and carbamoyl phosphate: step 3/3.</text>
</comment>
<comment type="subcellular location">
    <subcellularLocation>
        <location evidence="1">Cytoplasm</location>
    </subcellularLocation>
</comment>
<comment type="similarity">
    <text evidence="1">Belongs to the lyase 1 family. Argininosuccinate lyase subfamily.</text>
</comment>